<feature type="chain" id="PRO_0000383825" description="Hydroxyethylthiazole kinase">
    <location>
        <begin position="1"/>
        <end position="314"/>
    </location>
</feature>
<feature type="region of interest" description="Disordered" evidence="2">
    <location>
        <begin position="1"/>
        <end position="24"/>
    </location>
</feature>
<feature type="compositionally biased region" description="Low complexity" evidence="2">
    <location>
        <begin position="1"/>
        <end position="13"/>
    </location>
</feature>
<feature type="binding site" evidence="1">
    <location>
        <position position="70"/>
    </location>
    <ligand>
        <name>substrate</name>
    </ligand>
</feature>
<feature type="binding site" evidence="1">
    <location>
        <position position="145"/>
    </location>
    <ligand>
        <name>ATP</name>
        <dbReference type="ChEBI" id="CHEBI:30616"/>
    </ligand>
</feature>
<feature type="binding site" evidence="1">
    <location>
        <position position="217"/>
    </location>
    <ligand>
        <name>ATP</name>
        <dbReference type="ChEBI" id="CHEBI:30616"/>
    </ligand>
</feature>
<feature type="binding site" evidence="1">
    <location>
        <position position="244"/>
    </location>
    <ligand>
        <name>substrate</name>
    </ligand>
</feature>
<organism>
    <name type="scientific">Bifidobacterium longum subsp. infantis (strain ATCC 15697 / DSM 20088 / JCM 1222 / NCTC 11817 / S12)</name>
    <dbReference type="NCBI Taxonomy" id="391904"/>
    <lineage>
        <taxon>Bacteria</taxon>
        <taxon>Bacillati</taxon>
        <taxon>Actinomycetota</taxon>
        <taxon>Actinomycetes</taxon>
        <taxon>Bifidobacteriales</taxon>
        <taxon>Bifidobacteriaceae</taxon>
        <taxon>Bifidobacterium</taxon>
    </lineage>
</organism>
<gene>
    <name evidence="1" type="primary">thiM</name>
    <name type="ordered locus">Blon_0797</name>
    <name type="ordered locus">BLIJ_0811</name>
</gene>
<sequence>MSNSASSFADVSSGCTAGTPVPADSPIRDNIADAVRRVRETTPLAQSFTNFVTINLVANAQLAAGGTAAMSFLPDDVIETAKIAGANYINVGTLLPFYKDALPEIAQRLNYLDKPWVLDPVAAGIGHTRTAILQTFKAAPPTMIRANASEVIALANMWGLNTETVGDASEHRPAGVESVDDVESATGAAVALAQYLTEQHAKHSSHDASTRCAVAVSGIADLVTDGETVYRLPGGSAMMTKITGAGCSLGGVAATYLAVSDPLTAALSASLLYNRAAEIADTTSHGPGSFQVAFLDALWNVTAEQVAESEILVQ</sequence>
<evidence type="ECO:0000255" key="1">
    <source>
        <dbReference type="HAMAP-Rule" id="MF_00228"/>
    </source>
</evidence>
<evidence type="ECO:0000256" key="2">
    <source>
        <dbReference type="SAM" id="MobiDB-lite"/>
    </source>
</evidence>
<accession>B7GQ20</accession>
<accession>E8MQX8</accession>
<name>THIM_BIFLS</name>
<protein>
    <recommendedName>
        <fullName evidence="1">Hydroxyethylthiazole kinase</fullName>
        <ecNumber evidence="1">2.7.1.50</ecNumber>
    </recommendedName>
    <alternativeName>
        <fullName evidence="1">4-methyl-5-beta-hydroxyethylthiazole kinase</fullName>
        <shortName evidence="1">TH kinase</shortName>
        <shortName evidence="1">Thz kinase</shortName>
    </alternativeName>
</protein>
<keyword id="KW-0067">ATP-binding</keyword>
<keyword id="KW-0418">Kinase</keyword>
<keyword id="KW-0460">Magnesium</keyword>
<keyword id="KW-0479">Metal-binding</keyword>
<keyword id="KW-0547">Nucleotide-binding</keyword>
<keyword id="KW-0784">Thiamine biosynthesis</keyword>
<keyword id="KW-0808">Transferase</keyword>
<dbReference type="EC" id="2.7.1.50" evidence="1"/>
<dbReference type="EMBL" id="CP001095">
    <property type="protein sequence ID" value="ACJ51900.1"/>
    <property type="molecule type" value="Genomic_DNA"/>
</dbReference>
<dbReference type="EMBL" id="AP010889">
    <property type="protein sequence ID" value="BAJ68403.1"/>
    <property type="molecule type" value="Genomic_DNA"/>
</dbReference>
<dbReference type="RefSeq" id="WP_012577181.1">
    <property type="nucleotide sequence ID" value="NZ_JDTT01000007.1"/>
</dbReference>
<dbReference type="SMR" id="B7GQ20"/>
<dbReference type="KEGG" id="bln:Blon_0797"/>
<dbReference type="KEGG" id="blon:BLIJ_0811"/>
<dbReference type="PATRIC" id="fig|391904.8.peg.818"/>
<dbReference type="HOGENOM" id="CLU_019943_0_1_11"/>
<dbReference type="UniPathway" id="UPA00060">
    <property type="reaction ID" value="UER00139"/>
</dbReference>
<dbReference type="Proteomes" id="UP000001360">
    <property type="component" value="Chromosome"/>
</dbReference>
<dbReference type="GO" id="GO:0005524">
    <property type="term" value="F:ATP binding"/>
    <property type="evidence" value="ECO:0007669"/>
    <property type="project" value="UniProtKB-UniRule"/>
</dbReference>
<dbReference type="GO" id="GO:0004417">
    <property type="term" value="F:hydroxyethylthiazole kinase activity"/>
    <property type="evidence" value="ECO:0007669"/>
    <property type="project" value="UniProtKB-UniRule"/>
</dbReference>
<dbReference type="GO" id="GO:0000287">
    <property type="term" value="F:magnesium ion binding"/>
    <property type="evidence" value="ECO:0007669"/>
    <property type="project" value="UniProtKB-UniRule"/>
</dbReference>
<dbReference type="GO" id="GO:0009228">
    <property type="term" value="P:thiamine biosynthetic process"/>
    <property type="evidence" value="ECO:0007669"/>
    <property type="project" value="UniProtKB-KW"/>
</dbReference>
<dbReference type="GO" id="GO:0009229">
    <property type="term" value="P:thiamine diphosphate biosynthetic process"/>
    <property type="evidence" value="ECO:0007669"/>
    <property type="project" value="UniProtKB-UniRule"/>
</dbReference>
<dbReference type="CDD" id="cd01170">
    <property type="entry name" value="THZ_kinase"/>
    <property type="match status" value="1"/>
</dbReference>
<dbReference type="Gene3D" id="3.40.1190.20">
    <property type="match status" value="1"/>
</dbReference>
<dbReference type="HAMAP" id="MF_00228">
    <property type="entry name" value="Thz_kinase"/>
    <property type="match status" value="1"/>
</dbReference>
<dbReference type="InterPro" id="IPR000417">
    <property type="entry name" value="Hyethyz_kinase"/>
</dbReference>
<dbReference type="InterPro" id="IPR029056">
    <property type="entry name" value="Ribokinase-like"/>
</dbReference>
<dbReference type="Pfam" id="PF02110">
    <property type="entry name" value="HK"/>
    <property type="match status" value="1"/>
</dbReference>
<dbReference type="PIRSF" id="PIRSF000513">
    <property type="entry name" value="Thz_kinase"/>
    <property type="match status" value="1"/>
</dbReference>
<dbReference type="PRINTS" id="PR01099">
    <property type="entry name" value="HYETHTZKNASE"/>
</dbReference>
<dbReference type="SUPFAM" id="SSF53613">
    <property type="entry name" value="Ribokinase-like"/>
    <property type="match status" value="1"/>
</dbReference>
<comment type="function">
    <text evidence="1">Catalyzes the phosphorylation of the hydroxyl group of 4-methyl-5-beta-hydroxyethylthiazole (THZ).</text>
</comment>
<comment type="catalytic activity">
    <reaction evidence="1">
        <text>5-(2-hydroxyethyl)-4-methylthiazole + ATP = 4-methyl-5-(2-phosphooxyethyl)-thiazole + ADP + H(+)</text>
        <dbReference type="Rhea" id="RHEA:24212"/>
        <dbReference type="ChEBI" id="CHEBI:15378"/>
        <dbReference type="ChEBI" id="CHEBI:17957"/>
        <dbReference type="ChEBI" id="CHEBI:30616"/>
        <dbReference type="ChEBI" id="CHEBI:58296"/>
        <dbReference type="ChEBI" id="CHEBI:456216"/>
        <dbReference type="EC" id="2.7.1.50"/>
    </reaction>
</comment>
<comment type="cofactor">
    <cofactor evidence="1">
        <name>Mg(2+)</name>
        <dbReference type="ChEBI" id="CHEBI:18420"/>
    </cofactor>
</comment>
<comment type="pathway">
    <text evidence="1">Cofactor biosynthesis; thiamine diphosphate biosynthesis; 4-methyl-5-(2-phosphoethyl)-thiazole from 5-(2-hydroxyethyl)-4-methylthiazole: step 1/1.</text>
</comment>
<comment type="similarity">
    <text evidence="1">Belongs to the Thz kinase family.</text>
</comment>
<reference key="1">
    <citation type="journal article" date="2008" name="Proc. Natl. Acad. Sci. U.S.A.">
        <title>The genome sequence of Bifidobacterium longum subsp. infantis reveals adaptations for milk utilization within the infant microbiome.</title>
        <authorList>
            <person name="Sela D.A."/>
            <person name="Chapman J."/>
            <person name="Adeuya A."/>
            <person name="Kim J.H."/>
            <person name="Chen F."/>
            <person name="Whitehead T.R."/>
            <person name="Lapidus A."/>
            <person name="Rokhsar D.S."/>
            <person name="Lebrilla C.B."/>
            <person name="German J.B."/>
            <person name="Price N.P."/>
            <person name="Richardson P.M."/>
            <person name="Mills D.A."/>
        </authorList>
    </citation>
    <scope>NUCLEOTIDE SEQUENCE [LARGE SCALE GENOMIC DNA]</scope>
    <source>
        <strain>ATCC 15697 / DSM 20088 / JCM 1222 / NCTC 11817 / S12</strain>
    </source>
</reference>
<reference key="2">
    <citation type="journal article" date="2011" name="Nature">
        <title>Bifidobacteria can protect from enteropathogenic infection through production of acetate.</title>
        <authorList>
            <person name="Fukuda S."/>
            <person name="Toh H."/>
            <person name="Hase K."/>
            <person name="Oshima K."/>
            <person name="Nakanishi Y."/>
            <person name="Yoshimura K."/>
            <person name="Tobe T."/>
            <person name="Clarke J.M."/>
            <person name="Topping D.L."/>
            <person name="Suzuki T."/>
            <person name="Taylor T.D."/>
            <person name="Itoh K."/>
            <person name="Kikuchi J."/>
            <person name="Morita H."/>
            <person name="Hattori M."/>
            <person name="Ohno H."/>
        </authorList>
    </citation>
    <scope>NUCLEOTIDE SEQUENCE [LARGE SCALE GENOMIC DNA]</scope>
    <source>
        <strain>ATCC 15697 / DSM 20088 / JCM 1222 / NCTC 11817 / S12</strain>
    </source>
</reference>
<proteinExistence type="inferred from homology"/>